<gene>
    <name type="primary">nodD1</name>
</gene>
<dbReference type="EMBL" id="U04609">
    <property type="protein sequence ID" value="AAA63598.1"/>
    <property type="molecule type" value="Genomic_DNA"/>
</dbReference>
<dbReference type="RefSeq" id="WP_016848464.1">
    <property type="nucleotide sequence ID" value="NZ_BJNL01000082.1"/>
</dbReference>
<dbReference type="SMR" id="P50323"/>
<dbReference type="GeneID" id="92956826"/>
<dbReference type="GO" id="GO:0003677">
    <property type="term" value="F:DNA binding"/>
    <property type="evidence" value="ECO:0007669"/>
    <property type="project" value="UniProtKB-KW"/>
</dbReference>
<dbReference type="GO" id="GO:0003700">
    <property type="term" value="F:DNA-binding transcription factor activity"/>
    <property type="evidence" value="ECO:0007669"/>
    <property type="project" value="InterPro"/>
</dbReference>
<dbReference type="CDD" id="cd08462">
    <property type="entry name" value="PBP2_NodD"/>
    <property type="match status" value="1"/>
</dbReference>
<dbReference type="Gene3D" id="3.40.190.10">
    <property type="entry name" value="Periplasmic binding protein-like II"/>
    <property type="match status" value="2"/>
</dbReference>
<dbReference type="Gene3D" id="1.10.10.10">
    <property type="entry name" value="Winged helix-like DNA-binding domain superfamily/Winged helix DNA-binding domain"/>
    <property type="match status" value="1"/>
</dbReference>
<dbReference type="InterPro" id="IPR050389">
    <property type="entry name" value="LysR-type_TF"/>
</dbReference>
<dbReference type="InterPro" id="IPR005119">
    <property type="entry name" value="LysR_subst-bd"/>
</dbReference>
<dbReference type="InterPro" id="IPR037416">
    <property type="entry name" value="NodD_PBP2"/>
</dbReference>
<dbReference type="InterPro" id="IPR000847">
    <property type="entry name" value="Tscrpt_reg_HTH_LysR"/>
</dbReference>
<dbReference type="InterPro" id="IPR036388">
    <property type="entry name" value="WH-like_DNA-bd_sf"/>
</dbReference>
<dbReference type="InterPro" id="IPR036390">
    <property type="entry name" value="WH_DNA-bd_sf"/>
</dbReference>
<dbReference type="PANTHER" id="PTHR30118:SF6">
    <property type="entry name" value="HTH-TYPE TRANSCRIPTIONAL REGULATOR LEUO"/>
    <property type="match status" value="1"/>
</dbReference>
<dbReference type="PANTHER" id="PTHR30118">
    <property type="entry name" value="HTH-TYPE TRANSCRIPTIONAL REGULATOR LEUO-RELATED"/>
    <property type="match status" value="1"/>
</dbReference>
<dbReference type="Pfam" id="PF00126">
    <property type="entry name" value="HTH_1"/>
    <property type="match status" value="1"/>
</dbReference>
<dbReference type="Pfam" id="PF03466">
    <property type="entry name" value="LysR_substrate"/>
    <property type="match status" value="1"/>
</dbReference>
<dbReference type="PRINTS" id="PR00039">
    <property type="entry name" value="HTHLYSR"/>
</dbReference>
<dbReference type="SUPFAM" id="SSF53850">
    <property type="entry name" value="Periplasmic binding protein-like II"/>
    <property type="match status" value="1"/>
</dbReference>
<dbReference type="SUPFAM" id="SSF46785">
    <property type="entry name" value="Winged helix' DNA-binding domain"/>
    <property type="match status" value="1"/>
</dbReference>
<dbReference type="PROSITE" id="PS50931">
    <property type="entry name" value="HTH_LYSR"/>
    <property type="match status" value="1"/>
</dbReference>
<comment type="function">
    <text>NodD regulates the expression of the nodABCFE genes which encode other nodulation proteins. NodD is also a negative regulator of its own expression. Binds flavonoids as inducers.</text>
</comment>
<comment type="miscellaneous">
    <text>There are at least two nodD genes in B.elkanii.</text>
</comment>
<comment type="similarity">
    <text evidence="2">Belongs to the LysR transcriptional regulatory family.</text>
</comment>
<accession>P50323</accession>
<feature type="chain" id="PRO_0000105701" description="Nodulation protein D 1">
    <location>
        <begin position="1"/>
        <end position="314"/>
    </location>
</feature>
<feature type="domain" description="HTH lysR-type" evidence="1">
    <location>
        <begin position="6"/>
        <end position="63"/>
    </location>
</feature>
<feature type="DNA-binding region" description="H-T-H motif" evidence="1">
    <location>
        <begin position="23"/>
        <end position="42"/>
    </location>
</feature>
<evidence type="ECO:0000255" key="1">
    <source>
        <dbReference type="PROSITE-ProRule" id="PRU00253"/>
    </source>
</evidence>
<evidence type="ECO:0000305" key="2"/>
<name>NODD1_BRAEL</name>
<sequence length="314" mass="35946">MRFKGLDLNLLVALDALMTERNLTAAARQINLSQPAMSAAIARLRSYFRDELFTMRGRELVPTPGAEALAGPVREALLHIQLSIISRDAFDPTLSSRRFRVILSDFMTIVFFRRIVDRIAQEAPAVRFELLPFSDEPGELLRRGEVDFLILPELFMSSAHPKATLFDETLVCVGCRTNKQLLRPLTFEKYNSMGHVTAKFGRALRPNLEEWFLLEHGLKRRIEVVVQGFSLIPPILFDTGRIGTMPLRLARHFEKWMPLRIVEPPLPLPTFTEAVQWPAFHNTDPASIWMRRILLEEASNMGSADRKLPTRRRC</sequence>
<proteinExistence type="inferred from homology"/>
<reference key="1">
    <citation type="journal article" date="1994" name="Mol. Plant Microbe Interact.">
        <title>DNA sequence of the common nodulation genes of Bradyrhizobium elkanii and their phylogenetic relationship to those of other nodulating bacteria.</title>
        <authorList>
            <person name="Dobert R.C."/>
            <person name="Breil B.T."/>
            <person name="Triplett E.W."/>
        </authorList>
    </citation>
    <scope>NUCLEOTIDE SEQUENCE [GENOMIC DNA]</scope>
    <source>
        <strain>USDA 94</strain>
    </source>
</reference>
<protein>
    <recommendedName>
        <fullName>Nodulation protein D 1</fullName>
    </recommendedName>
</protein>
<keyword id="KW-0010">Activator</keyword>
<keyword id="KW-0238">DNA-binding</keyword>
<keyword id="KW-0536">Nodulation</keyword>
<keyword id="KW-0678">Repressor</keyword>
<keyword id="KW-0804">Transcription</keyword>
<keyword id="KW-0805">Transcription regulation</keyword>
<organism>
    <name type="scientific">Bradyrhizobium elkanii</name>
    <dbReference type="NCBI Taxonomy" id="29448"/>
    <lineage>
        <taxon>Bacteria</taxon>
        <taxon>Pseudomonadati</taxon>
        <taxon>Pseudomonadota</taxon>
        <taxon>Alphaproteobacteria</taxon>
        <taxon>Hyphomicrobiales</taxon>
        <taxon>Nitrobacteraceae</taxon>
        <taxon>Bradyrhizobium</taxon>
    </lineage>
</organism>